<proteinExistence type="inferred from homology"/>
<feature type="chain" id="PRO_0000271689" description="Molybdenum import ATP-binding protein ModC">
    <location>
        <begin position="1"/>
        <end position="352"/>
    </location>
</feature>
<feature type="domain" description="ABC transporter" evidence="1">
    <location>
        <begin position="1"/>
        <end position="229"/>
    </location>
</feature>
<feature type="domain" description="Mop" evidence="2">
    <location>
        <begin position="289"/>
        <end position="352"/>
    </location>
</feature>
<feature type="binding site" evidence="1">
    <location>
        <begin position="31"/>
        <end position="38"/>
    </location>
    <ligand>
        <name>ATP</name>
        <dbReference type="ChEBI" id="CHEBI:30616"/>
    </ligand>
</feature>
<comment type="function">
    <text evidence="1">Part of the ABC transporter complex ModABC involved in molybdenum import. Responsible for energy coupling to the transport system.</text>
</comment>
<comment type="catalytic activity">
    <reaction evidence="1">
        <text>molybdate(out) + ATP + H2O = molybdate(in) + ADP + phosphate + H(+)</text>
        <dbReference type="Rhea" id="RHEA:22020"/>
        <dbReference type="ChEBI" id="CHEBI:15377"/>
        <dbReference type="ChEBI" id="CHEBI:15378"/>
        <dbReference type="ChEBI" id="CHEBI:30616"/>
        <dbReference type="ChEBI" id="CHEBI:36264"/>
        <dbReference type="ChEBI" id="CHEBI:43474"/>
        <dbReference type="ChEBI" id="CHEBI:456216"/>
        <dbReference type="EC" id="7.3.2.5"/>
    </reaction>
</comment>
<comment type="subunit">
    <text evidence="1">The complex is composed of two ATP-binding proteins (ModC), two transmembrane proteins (ModB) and a solute-binding protein (ModA).</text>
</comment>
<comment type="subcellular location">
    <subcellularLocation>
        <location evidence="1">Cell inner membrane</location>
        <topology evidence="1">Peripheral membrane protein</topology>
    </subcellularLocation>
</comment>
<comment type="similarity">
    <text evidence="1">Belongs to the ABC transporter superfamily. Molybdate importer (TC 3.A.1.8) family.</text>
</comment>
<name>MODC_SALCH</name>
<sequence length="352" mass="39055">MLELNFSQTLGTHCLTLNETLPASGITAIFGVSGAGKTSLINAISGLTRPQKGRIALNGRVLHDAENGICLTPEKRRIGYVFQDARLFPHYKVRGNLRYGMAKSMTGQFDKLVSLLGIEALLDRLPGSLSGGEKQRVAIGRALLTAPELLLLDEPLASLDIPRKRELLPYLQRLAREINIPMLYVSHSLDEILHLADKVMVLEDGQVKAFGPLEEVWGSSVMHPWLPKEQQSSILKVSVLEHHPHYAMTALALGDQHLWVNKLNQPLQSTLRIRIQASDVSLVLQPPQQTSIRNVLRAKVANCYDDNGQVEVQLEIGGRTLWARISPWARDELNIKPGLWLYAQVKSVSITA</sequence>
<accession>Q57RH4</accession>
<dbReference type="EC" id="7.3.2.5" evidence="1"/>
<dbReference type="EMBL" id="AE017220">
    <property type="protein sequence ID" value="AAX64687.1"/>
    <property type="molecule type" value="Genomic_DNA"/>
</dbReference>
<dbReference type="RefSeq" id="WP_000891710.1">
    <property type="nucleotide sequence ID" value="NC_006905.1"/>
</dbReference>
<dbReference type="SMR" id="Q57RH4"/>
<dbReference type="KEGG" id="sec:SCH_0781"/>
<dbReference type="HOGENOM" id="CLU_000604_1_1_6"/>
<dbReference type="Proteomes" id="UP000000538">
    <property type="component" value="Chromosome"/>
</dbReference>
<dbReference type="GO" id="GO:0005886">
    <property type="term" value="C:plasma membrane"/>
    <property type="evidence" value="ECO:0007669"/>
    <property type="project" value="UniProtKB-SubCell"/>
</dbReference>
<dbReference type="GO" id="GO:0015412">
    <property type="term" value="F:ABC-type molybdate transporter activity"/>
    <property type="evidence" value="ECO:0007669"/>
    <property type="project" value="UniProtKB-EC"/>
</dbReference>
<dbReference type="GO" id="GO:0005524">
    <property type="term" value="F:ATP binding"/>
    <property type="evidence" value="ECO:0007669"/>
    <property type="project" value="UniProtKB-KW"/>
</dbReference>
<dbReference type="GO" id="GO:0016887">
    <property type="term" value="F:ATP hydrolysis activity"/>
    <property type="evidence" value="ECO:0007669"/>
    <property type="project" value="InterPro"/>
</dbReference>
<dbReference type="FunFam" id="2.40.50.100:FF:000037">
    <property type="entry name" value="Molybdenum import ATP-binding protein ModC"/>
    <property type="match status" value="1"/>
</dbReference>
<dbReference type="FunFam" id="3.40.50.300:FF:000634">
    <property type="entry name" value="Molybdenum import ATP-binding protein ModC"/>
    <property type="match status" value="1"/>
</dbReference>
<dbReference type="Gene3D" id="2.40.50.100">
    <property type="match status" value="1"/>
</dbReference>
<dbReference type="Gene3D" id="3.40.50.300">
    <property type="entry name" value="P-loop containing nucleotide triphosphate hydrolases"/>
    <property type="match status" value="1"/>
</dbReference>
<dbReference type="InterPro" id="IPR003593">
    <property type="entry name" value="AAA+_ATPase"/>
</dbReference>
<dbReference type="InterPro" id="IPR003439">
    <property type="entry name" value="ABC_transporter-like_ATP-bd"/>
</dbReference>
<dbReference type="InterPro" id="IPR017871">
    <property type="entry name" value="ABC_transporter-like_CS"/>
</dbReference>
<dbReference type="InterPro" id="IPR008995">
    <property type="entry name" value="Mo/tungstate-bd_C_term_dom"/>
</dbReference>
<dbReference type="InterPro" id="IPR011868">
    <property type="entry name" value="ModC_ABC_ATP-bd"/>
</dbReference>
<dbReference type="InterPro" id="IPR050334">
    <property type="entry name" value="Molybdenum_import_ModC"/>
</dbReference>
<dbReference type="InterPro" id="IPR004606">
    <property type="entry name" value="Mop_domain"/>
</dbReference>
<dbReference type="InterPro" id="IPR027417">
    <property type="entry name" value="P-loop_NTPase"/>
</dbReference>
<dbReference type="InterPro" id="IPR005116">
    <property type="entry name" value="Transp-assoc_OB_typ1"/>
</dbReference>
<dbReference type="NCBIfam" id="TIGR02142">
    <property type="entry name" value="modC_ABC"/>
    <property type="match status" value="1"/>
</dbReference>
<dbReference type="NCBIfam" id="TIGR00638">
    <property type="entry name" value="Mop"/>
    <property type="match status" value="1"/>
</dbReference>
<dbReference type="NCBIfam" id="NF008355">
    <property type="entry name" value="PRK11144.1"/>
    <property type="match status" value="1"/>
</dbReference>
<dbReference type="PANTHER" id="PTHR43514">
    <property type="entry name" value="ABC TRANSPORTER I FAMILY MEMBER 10"/>
    <property type="match status" value="1"/>
</dbReference>
<dbReference type="PANTHER" id="PTHR43514:SF4">
    <property type="entry name" value="ABC TRANSPORTER I FAMILY MEMBER 10"/>
    <property type="match status" value="1"/>
</dbReference>
<dbReference type="Pfam" id="PF00005">
    <property type="entry name" value="ABC_tran"/>
    <property type="match status" value="1"/>
</dbReference>
<dbReference type="Pfam" id="PF03459">
    <property type="entry name" value="TOBE"/>
    <property type="match status" value="1"/>
</dbReference>
<dbReference type="SMART" id="SM00382">
    <property type="entry name" value="AAA"/>
    <property type="match status" value="1"/>
</dbReference>
<dbReference type="SUPFAM" id="SSF50331">
    <property type="entry name" value="MOP-like"/>
    <property type="match status" value="1"/>
</dbReference>
<dbReference type="SUPFAM" id="SSF52540">
    <property type="entry name" value="P-loop containing nucleoside triphosphate hydrolases"/>
    <property type="match status" value="1"/>
</dbReference>
<dbReference type="PROSITE" id="PS00211">
    <property type="entry name" value="ABC_TRANSPORTER_1"/>
    <property type="match status" value="1"/>
</dbReference>
<dbReference type="PROSITE" id="PS50893">
    <property type="entry name" value="ABC_TRANSPORTER_2"/>
    <property type="match status" value="1"/>
</dbReference>
<dbReference type="PROSITE" id="PS51241">
    <property type="entry name" value="MODC"/>
    <property type="match status" value="1"/>
</dbReference>
<dbReference type="PROSITE" id="PS51866">
    <property type="entry name" value="MOP"/>
    <property type="match status" value="1"/>
</dbReference>
<gene>
    <name evidence="1" type="primary">modC</name>
    <name type="ordered locus">SCH_0781</name>
</gene>
<evidence type="ECO:0000255" key="1">
    <source>
        <dbReference type="HAMAP-Rule" id="MF_01705"/>
    </source>
</evidence>
<evidence type="ECO:0000255" key="2">
    <source>
        <dbReference type="PROSITE-ProRule" id="PRU01213"/>
    </source>
</evidence>
<organism>
    <name type="scientific">Salmonella choleraesuis (strain SC-B67)</name>
    <dbReference type="NCBI Taxonomy" id="321314"/>
    <lineage>
        <taxon>Bacteria</taxon>
        <taxon>Pseudomonadati</taxon>
        <taxon>Pseudomonadota</taxon>
        <taxon>Gammaproteobacteria</taxon>
        <taxon>Enterobacterales</taxon>
        <taxon>Enterobacteriaceae</taxon>
        <taxon>Salmonella</taxon>
    </lineage>
</organism>
<protein>
    <recommendedName>
        <fullName evidence="1">Molybdenum import ATP-binding protein ModC</fullName>
        <ecNumber evidence="1">7.3.2.5</ecNumber>
    </recommendedName>
</protein>
<reference key="1">
    <citation type="journal article" date="2005" name="Nucleic Acids Res.">
        <title>The genome sequence of Salmonella enterica serovar Choleraesuis, a highly invasive and resistant zoonotic pathogen.</title>
        <authorList>
            <person name="Chiu C.-H."/>
            <person name="Tang P."/>
            <person name="Chu C."/>
            <person name="Hu S."/>
            <person name="Bao Q."/>
            <person name="Yu J."/>
            <person name="Chou Y.-Y."/>
            <person name="Wang H.-S."/>
            <person name="Lee Y.-S."/>
        </authorList>
    </citation>
    <scope>NUCLEOTIDE SEQUENCE [LARGE SCALE GENOMIC DNA]</scope>
    <source>
        <strain>SC-B67</strain>
    </source>
</reference>
<keyword id="KW-0067">ATP-binding</keyword>
<keyword id="KW-0997">Cell inner membrane</keyword>
<keyword id="KW-1003">Cell membrane</keyword>
<keyword id="KW-0472">Membrane</keyword>
<keyword id="KW-0500">Molybdenum</keyword>
<keyword id="KW-0547">Nucleotide-binding</keyword>
<keyword id="KW-1278">Translocase</keyword>
<keyword id="KW-0813">Transport</keyword>